<comment type="function">
    <text evidence="2 3">Functions as a master transcriptional regulator of the adaptive response to hypoxia. Under hypoxic conditions, activates the transcription of over 40 genes, including erythropoietin, glucose transporters, glycolytic enzymes, vascular endothelial growth factor, HILPDA, and other genes whose protein products increase oxygen delivery or facilitate metabolic adaptation to hypoxia. Plays an essential role in embryonic vascularization, tumor angiogenesis and pathophysiology of ischemic disease (By similarity). Heterodimerizes with ARNT; heterodimer binds to core DNA sequence 5'-TACGTG-3' within the hypoxia response element (HRE) of target gene promoters (By similarity). Activation requires recruitment of transcriptional coactivators such as CREBBP and EP300. Activity is enhanced by interaction with NCOA1 and/or NCOA2. Interaction with redox regulatory protein APEX1 seems to activate CTAD and potentiates activation by NCOA1 and CREBBP. Involved in the axonal distribution and transport of mitochondria in neurons during hypoxia (By similarity).</text>
</comment>
<comment type="activity regulation">
    <text evidence="2">Induced by reactive oxygen species (ROS).</text>
</comment>
<comment type="subunit">
    <text evidence="2 3">Interacts with the ARNT; forms a heterodimer that binds core DNA sequence 5'-TACGTG-3' within the hypoxia response element (HRE) of target gene promoters (By similarity). Interacts with COPS5; the interaction increases the transcriptional activity of HIF1A through increased stability (By similarity). Interacts with EP300 (via TAZ-type 1 domains); the interaction is stimulated in response to hypoxia and inhibited by CITED2. Interacts with CREBBP (via TAZ-type 1 domains). Interacts with NCOA1, NCOA2, APEX1 and HSP90. Interacts (hydroxylated within the ODD domain) with VHLL (via beta domain); the interaction, leads to polyubiquitination and subsequent HIF1A proteasomal degradation. During hypoxia, sumoylated HIF1A also binds VHL; the interaction promotes the ubiquitination of HIF1A (By similarity). Interacts with SENP1; the interaction desumoylates HIF1A resulting in stabilization and activation of transcription (By similarity). Interacts (via the ODD domain) with NAA10; the interaction appears not to acetylate HIF1A nor have any affect on protein stability, during hypoxia. Interacts with RWDD3; the interaction enhances HIF1A sumoylation (By similarity). Interacts with TSGA10. Interacts with HIF3A (By similarity). Interacts with RORA (via the DNA binding domain); the interaction enhances HIF1A transcription under hypoxia through increasing protein stability. Interaction with PSMA7 inhibits the transactivation activity of HIF1A under both normoxic and hypoxia-mimicking conditions. Interacts with USP20. Interacts with RACK1; promotes HIF1A ubiquitination and proteasome-mediated degradation. Interacts (via N-terminus) with USP19. Interacts with SIRT2. Interacts (deacetylated form) with EGLN1. Interacts with CBFA2T3. Interacts with HSP90AA1 and HSP90AB1. Interacts with DCUN1D1; this interaction increases the interaction between VHL and DCUN1D1. Interacts with HIF1AN (By similarity).</text>
</comment>
<comment type="subcellular location">
    <subcellularLocation>
        <location evidence="1">Cytoplasm</location>
    </subcellularLocation>
    <subcellularLocation>
        <location evidence="3 6">Nucleus</location>
    </subcellularLocation>
    <subcellularLocation>
        <location evidence="3">Nucleus speckle</location>
    </subcellularLocation>
    <text evidence="3">Colocalizes with HIF3A in the nucleus and speckles. Cytoplasmic in normoxia, nuclear translocation in response to hypoxia.</text>
</comment>
<comment type="domain">
    <text evidence="2">Contains two independent C-terminal transactivation domains, NTAD and CTAD, which function synergistically. Their transcriptional activity is repressed by an intervening inhibitory domain (ID) (By similarity).</text>
</comment>
<comment type="PTM">
    <text evidence="2">S-nitrosylation of Cys-793 may be responsible for increased recruitment of p300 coactivator necessary for transcriptional activity of HIF-1 complex.</text>
</comment>
<comment type="PTM">
    <text evidence="2">Acetylation of Lys-533 by ARD1 increases interaction with VHL and stimulates subsequent proteasomal degradation. Deacetylation of Lys-702 by SIRT2 increases its interaction with and hydroxylation by EGLN1 thereby inactivating HIF1A activity by inducing its proteasomal degradation (By similarity).</text>
</comment>
<comment type="PTM">
    <text evidence="2 3">Requires phosphorylation for DNA-binding. Phosphorylation at Ser-248 by CSNK1D/CK1 represses kinase activity and impairs ARNT binding. Phosphorylation by GSK3-beta and PLK3 promote degradation by the proteasome (By similarity).</text>
</comment>
<comment type="PTM">
    <text evidence="2">The iron and 2-oxoglutarate dependent 3-hydroxylation of asparagine is (S) stereospecific within HIF CTAD domains.</text>
</comment>
<comment type="PTM">
    <text evidence="2 3">Sumoylated; with SUMO1 under hypoxia. Sumoylation is enhanced through interaction with RWDD3. Both sumoylation and desumoylation seem to be involved in the regulation of its stability during hypoxia. Sumoylation can promote either its stabilization or its VHL-dependent degradation by promoting hydroxyproline-independent HIF1A-VHL complex binding, thus leading to HIF1A ubiquitination and proteasomal degradation. Desumoylation by SENP1 increases its stability amd transcriptional activity. There is a disaccord between various publications on the effect of sumoylation and desumoylation on its stability and transcriptional activity (By similarity).</text>
</comment>
<comment type="PTM">
    <text evidence="2">In normoxia, is hydroxylated on Pro-403 and Pro-565 in the oxygen-dependent degradation domain (ODD) by EGLN1/PHD2 and EGLN2/PHD1. EGLN3/PHD3 has also been shown to hydroxylate Pro-565. The hydroxylated prolines promote interaction with VHL, initiating rapid ubiquitination and subsequent proteasomal degradation. Deubiquitinated by USP20. Under hypoxia, proline hydroxylation is impaired and ubiquitination is attenuated, resulting in stabilization (By similarity). In normoxia, is hydroxylated on Asn-796 by HIF1AN, thus abrogating interaction with CREBBP and EP300 and preventing transcriptional activation. Repressed by iron ion, via Fe(2+) prolyl hydroxylase (PHD) enzymes-mediated hydroxylation and subsequent proteasomal degradation.</text>
</comment>
<name>HIF1A_EOSFB</name>
<accession>Q309Z6</accession>
<evidence type="ECO:0000250" key="1"/>
<evidence type="ECO:0000250" key="2">
    <source>
        <dbReference type="UniProtKB" id="Q16665"/>
    </source>
</evidence>
<evidence type="ECO:0000250" key="3">
    <source>
        <dbReference type="UniProtKB" id="Q61221"/>
    </source>
</evidence>
<evidence type="ECO:0000255" key="4"/>
<evidence type="ECO:0000255" key="5">
    <source>
        <dbReference type="PROSITE-ProRule" id="PRU00140"/>
    </source>
</evidence>
<evidence type="ECO:0000255" key="6">
    <source>
        <dbReference type="PROSITE-ProRule" id="PRU00981"/>
    </source>
</evidence>
<evidence type="ECO:0000256" key="7">
    <source>
        <dbReference type="SAM" id="MobiDB-lite"/>
    </source>
</evidence>
<proteinExistence type="evidence at transcript level"/>
<dbReference type="EMBL" id="DQ229099">
    <property type="protein sequence ID" value="ABB17537.1"/>
    <property type="molecule type" value="mRNA"/>
</dbReference>
<dbReference type="SMR" id="Q309Z6"/>
<dbReference type="GO" id="GO:1904115">
    <property type="term" value="C:axon cytoplasm"/>
    <property type="evidence" value="ECO:0007669"/>
    <property type="project" value="GOC"/>
</dbReference>
<dbReference type="GO" id="GO:0005829">
    <property type="term" value="C:cytosol"/>
    <property type="evidence" value="ECO:0000250"/>
    <property type="project" value="UniProtKB"/>
</dbReference>
<dbReference type="GO" id="GO:0016607">
    <property type="term" value="C:nuclear speck"/>
    <property type="evidence" value="ECO:0000250"/>
    <property type="project" value="UniProtKB"/>
</dbReference>
<dbReference type="GO" id="GO:0005634">
    <property type="term" value="C:nucleus"/>
    <property type="evidence" value="ECO:0000250"/>
    <property type="project" value="UniProtKB"/>
</dbReference>
<dbReference type="GO" id="GO:0003700">
    <property type="term" value="F:DNA-binding transcription factor activity"/>
    <property type="evidence" value="ECO:0000250"/>
    <property type="project" value="UniProtKB"/>
</dbReference>
<dbReference type="GO" id="GO:0000981">
    <property type="term" value="F:DNA-binding transcription factor activity, RNA polymerase II-specific"/>
    <property type="evidence" value="ECO:0007669"/>
    <property type="project" value="TreeGrafter"/>
</dbReference>
<dbReference type="GO" id="GO:0046982">
    <property type="term" value="F:protein heterodimerization activity"/>
    <property type="evidence" value="ECO:0000250"/>
    <property type="project" value="UniProtKB"/>
</dbReference>
<dbReference type="GO" id="GO:0000977">
    <property type="term" value="F:RNA polymerase II transcription regulatory region sequence-specific DNA binding"/>
    <property type="evidence" value="ECO:0007669"/>
    <property type="project" value="TreeGrafter"/>
</dbReference>
<dbReference type="GO" id="GO:0043565">
    <property type="term" value="F:sequence-specific DNA binding"/>
    <property type="evidence" value="ECO:0000250"/>
    <property type="project" value="UniProtKB"/>
</dbReference>
<dbReference type="GO" id="GO:0001223">
    <property type="term" value="F:transcription coactivator binding"/>
    <property type="evidence" value="ECO:0000250"/>
    <property type="project" value="UniProtKB"/>
</dbReference>
<dbReference type="GO" id="GO:0019896">
    <property type="term" value="P:axonal transport of mitochondrion"/>
    <property type="evidence" value="ECO:0000250"/>
    <property type="project" value="UniProtKB"/>
</dbReference>
<dbReference type="GO" id="GO:0071456">
    <property type="term" value="P:cellular response to hypoxia"/>
    <property type="evidence" value="ECO:0000250"/>
    <property type="project" value="UniProtKB"/>
</dbReference>
<dbReference type="GO" id="GO:0001678">
    <property type="term" value="P:intracellular glucose homeostasis"/>
    <property type="evidence" value="ECO:0000250"/>
    <property type="project" value="UniProtKB"/>
</dbReference>
<dbReference type="GO" id="GO:1900017">
    <property type="term" value="P:positive regulation of cytokine production involved in inflammatory response"/>
    <property type="evidence" value="ECO:0000250"/>
    <property type="project" value="UniProtKB"/>
</dbReference>
<dbReference type="GO" id="GO:0045893">
    <property type="term" value="P:positive regulation of DNA-templated transcription"/>
    <property type="evidence" value="ECO:0000250"/>
    <property type="project" value="UniProtKB"/>
</dbReference>
<dbReference type="GO" id="GO:0045944">
    <property type="term" value="P:positive regulation of transcription by RNA polymerase II"/>
    <property type="evidence" value="ECO:0000250"/>
    <property type="project" value="UniProtKB"/>
</dbReference>
<dbReference type="GO" id="GO:0010468">
    <property type="term" value="P:regulation of gene expression"/>
    <property type="evidence" value="ECO:0000250"/>
    <property type="project" value="UniProtKB"/>
</dbReference>
<dbReference type="GO" id="GO:0006110">
    <property type="term" value="P:regulation of glycolytic process"/>
    <property type="evidence" value="ECO:0000250"/>
    <property type="project" value="UniProtKB"/>
</dbReference>
<dbReference type="GO" id="GO:2000434">
    <property type="term" value="P:regulation of protein neddylation"/>
    <property type="evidence" value="ECO:0000250"/>
    <property type="project" value="UniProtKB"/>
</dbReference>
<dbReference type="GO" id="GO:0001666">
    <property type="term" value="P:response to hypoxia"/>
    <property type="evidence" value="ECO:0000250"/>
    <property type="project" value="UniProtKB"/>
</dbReference>
<dbReference type="GO" id="GO:0000302">
    <property type="term" value="P:response to reactive oxygen species"/>
    <property type="evidence" value="ECO:0000250"/>
    <property type="project" value="UniProtKB"/>
</dbReference>
<dbReference type="CDD" id="cd19727">
    <property type="entry name" value="bHLH-PAS_HIF1a_PASD8"/>
    <property type="match status" value="1"/>
</dbReference>
<dbReference type="CDD" id="cd00130">
    <property type="entry name" value="PAS"/>
    <property type="match status" value="2"/>
</dbReference>
<dbReference type="FunFam" id="3.30.450.20:FF:000005">
    <property type="entry name" value="Hypoxia-inducible factor 1 subunit alpha"/>
    <property type="match status" value="1"/>
</dbReference>
<dbReference type="FunFam" id="3.30.450.20:FF:000015">
    <property type="entry name" value="Hypoxia-inducible factor 1-alpha isoform 1"/>
    <property type="match status" value="1"/>
</dbReference>
<dbReference type="FunFam" id="4.10.280.10:FF:000076">
    <property type="entry name" value="hypoxia-inducible factor 3-alpha isoform X1"/>
    <property type="match status" value="1"/>
</dbReference>
<dbReference type="Gene3D" id="4.10.280.10">
    <property type="entry name" value="Helix-loop-helix DNA-binding domain"/>
    <property type="match status" value="1"/>
</dbReference>
<dbReference type="Gene3D" id="3.30.450.20">
    <property type="entry name" value="PAS domain"/>
    <property type="match status" value="2"/>
</dbReference>
<dbReference type="InterPro" id="IPR011598">
    <property type="entry name" value="bHLH_dom"/>
</dbReference>
<dbReference type="InterPro" id="IPR001321">
    <property type="entry name" value="HIF-1_alpha"/>
</dbReference>
<dbReference type="InterPro" id="IPR014887">
    <property type="entry name" value="HIF-1_CTAD"/>
</dbReference>
<dbReference type="InterPro" id="IPR021537">
    <property type="entry name" value="HIF_alpha-like"/>
</dbReference>
<dbReference type="InterPro" id="IPR036638">
    <property type="entry name" value="HLH_DNA-bd_sf"/>
</dbReference>
<dbReference type="InterPro" id="IPR001610">
    <property type="entry name" value="PAC"/>
</dbReference>
<dbReference type="InterPro" id="IPR000014">
    <property type="entry name" value="PAS"/>
</dbReference>
<dbReference type="InterPro" id="IPR035965">
    <property type="entry name" value="PAS-like_dom_sf"/>
</dbReference>
<dbReference type="InterPro" id="IPR013767">
    <property type="entry name" value="PAS_fold"/>
</dbReference>
<dbReference type="InterPro" id="IPR013655">
    <property type="entry name" value="PAS_fold_3"/>
</dbReference>
<dbReference type="NCBIfam" id="TIGR00229">
    <property type="entry name" value="sensory_box"/>
    <property type="match status" value="2"/>
</dbReference>
<dbReference type="PANTHER" id="PTHR23043">
    <property type="entry name" value="HYPOXIA-INDUCIBLE FACTOR 1 ALPHA"/>
    <property type="match status" value="1"/>
</dbReference>
<dbReference type="PANTHER" id="PTHR23043:SF7">
    <property type="entry name" value="HYPOXIA-INDUCIBLE FACTOR 1-ALPHA"/>
    <property type="match status" value="1"/>
</dbReference>
<dbReference type="Pfam" id="PF23171">
    <property type="entry name" value="bHLH_HIF1A"/>
    <property type="match status" value="1"/>
</dbReference>
<dbReference type="Pfam" id="PF11413">
    <property type="entry name" value="HIF-1"/>
    <property type="match status" value="1"/>
</dbReference>
<dbReference type="Pfam" id="PF08778">
    <property type="entry name" value="HIF-1a_CTAD"/>
    <property type="match status" value="1"/>
</dbReference>
<dbReference type="Pfam" id="PF00989">
    <property type="entry name" value="PAS"/>
    <property type="match status" value="1"/>
</dbReference>
<dbReference type="Pfam" id="PF08447">
    <property type="entry name" value="PAS_3"/>
    <property type="match status" value="1"/>
</dbReference>
<dbReference type="PRINTS" id="PR01080">
    <property type="entry name" value="HYPOXIAIF1A"/>
</dbReference>
<dbReference type="SMART" id="SM00353">
    <property type="entry name" value="HLH"/>
    <property type="match status" value="1"/>
</dbReference>
<dbReference type="SMART" id="SM00086">
    <property type="entry name" value="PAC"/>
    <property type="match status" value="1"/>
</dbReference>
<dbReference type="SMART" id="SM00091">
    <property type="entry name" value="PAS"/>
    <property type="match status" value="2"/>
</dbReference>
<dbReference type="SUPFAM" id="SSF47459">
    <property type="entry name" value="HLH, helix-loop-helix DNA-binding domain"/>
    <property type="match status" value="1"/>
</dbReference>
<dbReference type="SUPFAM" id="SSF55785">
    <property type="entry name" value="PYP-like sensor domain (PAS domain)"/>
    <property type="match status" value="2"/>
</dbReference>
<dbReference type="PROSITE" id="PS50888">
    <property type="entry name" value="BHLH"/>
    <property type="match status" value="1"/>
</dbReference>
<dbReference type="PROSITE" id="PS50112">
    <property type="entry name" value="PAS"/>
    <property type="match status" value="2"/>
</dbReference>
<sequence>MEGAAGGEEKKNRMSSERRKEKSRDAARSRRSKESEVFYELAHQLPLPHNVSSHLDKASVMRLTISYLRVRKLLDAGDLDIEDDMKAQMNCFYLKALDGFVMVLTDDGDMIYISDNVNKYMGLTQFELTGHSVFDFTHPCDHEEMREMLTHRNGPIKKGKEQNTQRSFFLRMKCTLTSRGRTMNIKSATWKVLHCTGHIHVYDTNSNQPQCGYKKPPMTCLVLICEPIPHPSNIEIPLDSKTFLSRHSLDMKFSYCDERITELMGYEPEELLGRSIYEYYHALDSDHLTKTHHDMFTKGQVTTGQYRMLAKRGGYVWVETQATVIYNTKNSQPQCIVCVNYVVSGIIQHDLIFSLQQTECVLKPVESSDMKMTQLFTKVESEDTSCLFDKLKKEPDALTLLAPAAGDTIISLDFGSDDTETEDQQLEDVPLYNDVMFPSSDDKLTSINLAMSPLPASETPKPLRSNADPALNQEVALKLEPNAESLELSFTMPQIQDQPASPSDGSTRQSSPEPNSPSEYCFDVDSDMVNVFKLELVEKLFAEDTEAKNPFSTQDTDLDLEMLAPYIPMDDDFQLRSFDQLSPLESSSPNPPSVSTAFQQTQLQEPTITTTTTEELKTVTKDSTEDIKILITSPSSTHTPKETTTATTSSPYSGTQSRTASPNRAGQGVIEQTEKSHPRSPNVLSVTLSQRNTVPEEELNPKIIALQNAQRKRKMEHDGSLFQAAGIGTLLQQPDDRAPATSLSWKRVKGCKSSGQNGMEQKTIILIPSDLACRLLGQSMDGSGLPQLTSYDCEVNAPIQGSRNLLQGEELLRALDQVN</sequence>
<keyword id="KW-0007">Acetylation</keyword>
<keyword id="KW-0010">Activator</keyword>
<keyword id="KW-0963">Cytoplasm</keyword>
<keyword id="KW-0238">DNA-binding</keyword>
<keyword id="KW-0379">Hydroxylation</keyword>
<keyword id="KW-1017">Isopeptide bond</keyword>
<keyword id="KW-0539">Nucleus</keyword>
<keyword id="KW-0597">Phosphoprotein</keyword>
<keyword id="KW-0677">Repeat</keyword>
<keyword id="KW-0702">S-nitrosylation</keyword>
<keyword id="KW-0804">Transcription</keyword>
<keyword id="KW-0805">Transcription regulation</keyword>
<keyword id="KW-0832">Ubl conjugation</keyword>
<feature type="chain" id="PRO_0000254948" description="Hypoxia-inducible factor 1-alpha">
    <location>
        <begin position="1"/>
        <end position="819"/>
    </location>
</feature>
<feature type="domain" description="bHLH" evidence="6">
    <location>
        <begin position="18"/>
        <end position="71"/>
    </location>
</feature>
<feature type="domain" description="PAS 1" evidence="5">
    <location>
        <begin position="86"/>
        <end position="159"/>
    </location>
</feature>
<feature type="domain" description="PAS 2" evidence="5">
    <location>
        <begin position="229"/>
        <end position="299"/>
    </location>
</feature>
<feature type="domain" description="PAC">
    <location>
        <begin position="303"/>
        <end position="346"/>
    </location>
</feature>
<feature type="region of interest" description="Interaction with TSGA10" evidence="3">
    <location>
        <begin position="1"/>
        <end position="402"/>
    </location>
</feature>
<feature type="region of interest" description="Disordered" evidence="7">
    <location>
        <begin position="1"/>
        <end position="31"/>
    </location>
</feature>
<feature type="region of interest" description="DNA-binding" evidence="3">
    <location>
        <begin position="22"/>
        <end position="31"/>
    </location>
</feature>
<feature type="region of interest" description="Required for heterodimer formation with ARNT" evidence="3">
    <location>
        <begin position="171"/>
        <end position="192"/>
    </location>
</feature>
<feature type="region of interest" description="ODD">
    <location>
        <begin position="402"/>
        <end position="599"/>
    </location>
</feature>
<feature type="region of interest" description="Disordered" evidence="7">
    <location>
        <begin position="495"/>
        <end position="521"/>
    </location>
</feature>
<feature type="region of interest" description="NTAD">
    <location>
        <begin position="532"/>
        <end position="576"/>
    </location>
</feature>
<feature type="region of interest" description="ID">
    <location>
        <begin position="577"/>
        <end position="778"/>
    </location>
</feature>
<feature type="region of interest" description="Disordered" evidence="7">
    <location>
        <begin position="581"/>
        <end position="685"/>
    </location>
</feature>
<feature type="region of interest" description="CTAD">
    <location>
        <begin position="779"/>
        <end position="819"/>
    </location>
</feature>
<feature type="short sequence motif" description="Nuclear localization signal" evidence="4">
    <location>
        <begin position="711"/>
        <end position="717"/>
    </location>
</feature>
<feature type="compositionally biased region" description="Basic and acidic residues" evidence="7">
    <location>
        <begin position="7"/>
        <end position="31"/>
    </location>
</feature>
<feature type="compositionally biased region" description="Polar residues" evidence="7">
    <location>
        <begin position="495"/>
        <end position="518"/>
    </location>
</feature>
<feature type="compositionally biased region" description="Low complexity" evidence="7">
    <location>
        <begin position="582"/>
        <end position="613"/>
    </location>
</feature>
<feature type="compositionally biased region" description="Basic and acidic residues" evidence="7">
    <location>
        <begin position="614"/>
        <end position="628"/>
    </location>
</feature>
<feature type="compositionally biased region" description="Low complexity" evidence="7">
    <location>
        <begin position="632"/>
        <end position="655"/>
    </location>
</feature>
<feature type="modified residue" description="Phosphoserine; by CK1" evidence="2">
    <location>
        <position position="248"/>
    </location>
</feature>
<feature type="modified residue" description="4-hydroxyproline" evidence="2">
    <location>
        <position position="403"/>
    </location>
</feature>
<feature type="modified residue" description="N6-acetyllysine; alternate" evidence="2">
    <location>
        <position position="533"/>
    </location>
</feature>
<feature type="modified residue" description="Phosphoserine; by GSK3-beta" evidence="2">
    <location>
        <position position="552"/>
    </location>
</feature>
<feature type="modified residue" description="Phosphothreonine; by GSK3-beta" evidence="2">
    <location>
        <position position="556"/>
    </location>
</feature>
<feature type="modified residue" description="4-hydroxyproline" evidence="2">
    <location>
        <position position="565"/>
    </location>
</feature>
<feature type="modified residue" description="Phosphoserine; by PLK3" evidence="2">
    <location>
        <position position="577"/>
    </location>
</feature>
<feature type="modified residue" description="Phosphoserine; by PLK3" evidence="2">
    <location>
        <position position="650"/>
    </location>
</feature>
<feature type="modified residue" description="N6-acetyllysine" evidence="2">
    <location>
        <position position="702"/>
    </location>
</feature>
<feature type="modified residue" description="S-nitrosocysteine" evidence="2">
    <location>
        <position position="793"/>
    </location>
</feature>
<feature type="modified residue" description="(3S)-3-hydroxyasparagine" evidence="2">
    <location>
        <position position="796"/>
    </location>
</feature>
<feature type="cross-link" description="Glycyl lysine isopeptide (Lys-Gly) (interchain with G-Cter in ubiquitin); alternate" evidence="2">
    <location>
        <position position="533"/>
    </location>
</feature>
<feature type="cross-link" description="Glycyl lysine isopeptide (Lys-Gly) (interchain with G-Cter in ubiquitin)" evidence="2">
    <location>
        <position position="539"/>
    </location>
</feature>
<feature type="cross-link" description="Glycyl lysine isopeptide (Lys-Gly) (interchain with G-Cter in ubiquitin)" evidence="2">
    <location>
        <position position="548"/>
    </location>
</feature>
<protein>
    <recommendedName>
        <fullName>Hypoxia-inducible factor 1-alpha</fullName>
        <shortName>HIF-1-alpha</shortName>
        <shortName>HIF1-alpha</shortName>
    </recommendedName>
</protein>
<reference key="1">
    <citation type="submission" date="2005-10" db="EMBL/GenBank/DDBJ databases">
        <title>Cloning of hypoxia-inducible factor 1 alpha from plateau zokor (Myospalax baileyi).</title>
        <authorList>
            <person name="Chen X.-Q."/>
            <person name="Xie Z.-Y."/>
            <person name="Du J.-Z."/>
        </authorList>
    </citation>
    <scope>NUCLEOTIDE SEQUENCE [MRNA]</scope>
    <source>
        <tissue>Liver</tissue>
    </source>
</reference>
<gene>
    <name type="primary">HIF1A</name>
</gene>
<organism>
    <name type="scientific">Eospalax fontanierii baileyi</name>
    <name type="common">Plateau zokor</name>
    <name type="synonym">Eospalax baileyi</name>
    <dbReference type="NCBI Taxonomy" id="146132"/>
    <lineage>
        <taxon>Eukaryota</taxon>
        <taxon>Metazoa</taxon>
        <taxon>Chordata</taxon>
        <taxon>Craniata</taxon>
        <taxon>Vertebrata</taxon>
        <taxon>Euteleostomi</taxon>
        <taxon>Mammalia</taxon>
        <taxon>Eutheria</taxon>
        <taxon>Euarchontoglires</taxon>
        <taxon>Glires</taxon>
        <taxon>Rodentia</taxon>
        <taxon>Myomorpha</taxon>
        <taxon>Muroidea</taxon>
        <taxon>Spalacidae</taxon>
        <taxon>Myospalacinae</taxon>
        <taxon>Eospalax</taxon>
    </lineage>
</organism>